<keyword id="KW-1185">Reference proteome</keyword>
<keyword id="KW-0687">Ribonucleoprotein</keyword>
<keyword id="KW-0689">Ribosomal protein</keyword>
<protein>
    <recommendedName>
        <fullName evidence="1">Large ribosomal subunit protein bL34</fullName>
    </recommendedName>
    <alternativeName>
        <fullName evidence="2">50S ribosomal protein L34</fullName>
    </alternativeName>
</protein>
<feature type="chain" id="PRO_1000196054" description="Large ribosomal subunit protein bL34">
    <location>
        <begin position="1"/>
        <end position="49"/>
    </location>
</feature>
<evidence type="ECO:0000255" key="1">
    <source>
        <dbReference type="HAMAP-Rule" id="MF_00391"/>
    </source>
</evidence>
<evidence type="ECO:0000305" key="2"/>
<name>RL34_CITBB</name>
<proteinExistence type="inferred from homology"/>
<reference key="1">
    <citation type="submission" date="2008-07" db="EMBL/GenBank/DDBJ databases">
        <title>Complete sequence of Geobacter bemidjiensis BEM.</title>
        <authorList>
            <consortium name="US DOE Joint Genome Institute"/>
            <person name="Lucas S."/>
            <person name="Copeland A."/>
            <person name="Lapidus A."/>
            <person name="Glavina del Rio T."/>
            <person name="Dalin E."/>
            <person name="Tice H."/>
            <person name="Bruce D."/>
            <person name="Goodwin L."/>
            <person name="Pitluck S."/>
            <person name="Kiss H."/>
            <person name="Brettin T."/>
            <person name="Detter J.C."/>
            <person name="Han C."/>
            <person name="Kuske C.R."/>
            <person name="Schmutz J."/>
            <person name="Larimer F."/>
            <person name="Land M."/>
            <person name="Hauser L."/>
            <person name="Kyrpides N."/>
            <person name="Lykidis A."/>
            <person name="Lovley D."/>
            <person name="Richardson P."/>
        </authorList>
    </citation>
    <scope>NUCLEOTIDE SEQUENCE [LARGE SCALE GENOMIC DNA]</scope>
    <source>
        <strain>ATCC BAA-1014 / DSM 16622 / JCM 12645 / Bem</strain>
    </source>
</reference>
<comment type="similarity">
    <text evidence="1">Belongs to the bacterial ribosomal protein bL34 family.</text>
</comment>
<accession>B5EGY1</accession>
<dbReference type="EMBL" id="CP001124">
    <property type="protein sequence ID" value="ACH41051.1"/>
    <property type="molecule type" value="Genomic_DNA"/>
</dbReference>
<dbReference type="RefSeq" id="WP_012532489.1">
    <property type="nucleotide sequence ID" value="NC_011146.1"/>
</dbReference>
<dbReference type="SMR" id="B5EGY1"/>
<dbReference type="STRING" id="404380.Gbem_4061"/>
<dbReference type="KEGG" id="gbm:Gbem_4061"/>
<dbReference type="eggNOG" id="COG0230">
    <property type="taxonomic scope" value="Bacteria"/>
</dbReference>
<dbReference type="HOGENOM" id="CLU_129938_2_0_7"/>
<dbReference type="OrthoDB" id="9804164at2"/>
<dbReference type="Proteomes" id="UP000008825">
    <property type="component" value="Chromosome"/>
</dbReference>
<dbReference type="GO" id="GO:1990904">
    <property type="term" value="C:ribonucleoprotein complex"/>
    <property type="evidence" value="ECO:0007669"/>
    <property type="project" value="UniProtKB-KW"/>
</dbReference>
<dbReference type="GO" id="GO:0005840">
    <property type="term" value="C:ribosome"/>
    <property type="evidence" value="ECO:0007669"/>
    <property type="project" value="UniProtKB-KW"/>
</dbReference>
<dbReference type="GO" id="GO:0003735">
    <property type="term" value="F:structural constituent of ribosome"/>
    <property type="evidence" value="ECO:0007669"/>
    <property type="project" value="InterPro"/>
</dbReference>
<dbReference type="GO" id="GO:0006412">
    <property type="term" value="P:translation"/>
    <property type="evidence" value="ECO:0007669"/>
    <property type="project" value="UniProtKB-UniRule"/>
</dbReference>
<dbReference type="FunFam" id="1.10.287.3980:FF:000001">
    <property type="entry name" value="Mitochondrial ribosomal protein L34"/>
    <property type="match status" value="1"/>
</dbReference>
<dbReference type="Gene3D" id="1.10.287.3980">
    <property type="match status" value="1"/>
</dbReference>
<dbReference type="HAMAP" id="MF_00391">
    <property type="entry name" value="Ribosomal_bL34"/>
    <property type="match status" value="1"/>
</dbReference>
<dbReference type="InterPro" id="IPR000271">
    <property type="entry name" value="Ribosomal_bL34"/>
</dbReference>
<dbReference type="InterPro" id="IPR020939">
    <property type="entry name" value="Ribosomal_bL34_CS"/>
</dbReference>
<dbReference type="NCBIfam" id="TIGR01030">
    <property type="entry name" value="rpmH_bact"/>
    <property type="match status" value="1"/>
</dbReference>
<dbReference type="PANTHER" id="PTHR14503:SF4">
    <property type="entry name" value="LARGE RIBOSOMAL SUBUNIT PROTEIN BL34M"/>
    <property type="match status" value="1"/>
</dbReference>
<dbReference type="PANTHER" id="PTHR14503">
    <property type="entry name" value="MITOCHONDRIAL RIBOSOMAL PROTEIN 34 FAMILY MEMBER"/>
    <property type="match status" value="1"/>
</dbReference>
<dbReference type="Pfam" id="PF00468">
    <property type="entry name" value="Ribosomal_L34"/>
    <property type="match status" value="1"/>
</dbReference>
<dbReference type="PROSITE" id="PS00784">
    <property type="entry name" value="RIBOSOMAL_L34"/>
    <property type="match status" value="1"/>
</dbReference>
<organism>
    <name type="scientific">Citrifermentans bemidjiense (strain ATCC BAA-1014 / DSM 16622 / JCM 12645 / Bem)</name>
    <name type="common">Geobacter bemidjiensis</name>
    <dbReference type="NCBI Taxonomy" id="404380"/>
    <lineage>
        <taxon>Bacteria</taxon>
        <taxon>Pseudomonadati</taxon>
        <taxon>Thermodesulfobacteriota</taxon>
        <taxon>Desulfuromonadia</taxon>
        <taxon>Geobacterales</taxon>
        <taxon>Geobacteraceae</taxon>
        <taxon>Citrifermentans</taxon>
    </lineage>
</organism>
<gene>
    <name evidence="1" type="primary">rpmH</name>
    <name type="ordered locus">Gbem_4061</name>
</gene>
<sequence>MKRTFQPSNTSRKRTHGFLVRMATKNGRLVIKRRRAKGRKRLSVSIATK</sequence>